<protein>
    <recommendedName>
        <fullName evidence="1">Octanoyltransferase</fullName>
        <ecNumber evidence="1">2.3.1.181</ecNumber>
    </recommendedName>
    <alternativeName>
        <fullName evidence="1">Lipoate-protein ligase B</fullName>
    </alternativeName>
    <alternativeName>
        <fullName evidence="1">Lipoyl/octanoyl transferase</fullName>
    </alternativeName>
    <alternativeName>
        <fullName evidence="1">Octanoyl-[acyl-carrier-protein]-protein N-octanoyltransferase</fullName>
    </alternativeName>
</protein>
<dbReference type="EC" id="2.3.1.181" evidence="1"/>
<dbReference type="EMBL" id="AP007255">
    <property type="protein sequence ID" value="BAE49525.1"/>
    <property type="molecule type" value="Genomic_DNA"/>
</dbReference>
<dbReference type="SMR" id="Q2W9F0"/>
<dbReference type="STRING" id="342108.amb0721"/>
<dbReference type="KEGG" id="mag:amb0721"/>
<dbReference type="HOGENOM" id="CLU_035168_3_0_5"/>
<dbReference type="OrthoDB" id="9787061at2"/>
<dbReference type="UniPathway" id="UPA00538">
    <property type="reaction ID" value="UER00592"/>
</dbReference>
<dbReference type="Proteomes" id="UP000007058">
    <property type="component" value="Chromosome"/>
</dbReference>
<dbReference type="GO" id="GO:0005737">
    <property type="term" value="C:cytoplasm"/>
    <property type="evidence" value="ECO:0007669"/>
    <property type="project" value="UniProtKB-SubCell"/>
</dbReference>
<dbReference type="GO" id="GO:0033819">
    <property type="term" value="F:lipoyl(octanoyl) transferase activity"/>
    <property type="evidence" value="ECO:0007669"/>
    <property type="project" value="UniProtKB-EC"/>
</dbReference>
<dbReference type="GO" id="GO:0036211">
    <property type="term" value="P:protein modification process"/>
    <property type="evidence" value="ECO:0007669"/>
    <property type="project" value="InterPro"/>
</dbReference>
<dbReference type="CDD" id="cd16444">
    <property type="entry name" value="LipB"/>
    <property type="match status" value="1"/>
</dbReference>
<dbReference type="Gene3D" id="3.30.930.10">
    <property type="entry name" value="Bira Bifunctional Protein, Domain 2"/>
    <property type="match status" value="1"/>
</dbReference>
<dbReference type="HAMAP" id="MF_00013">
    <property type="entry name" value="LipB"/>
    <property type="match status" value="1"/>
</dbReference>
<dbReference type="InterPro" id="IPR045864">
    <property type="entry name" value="aa-tRNA-synth_II/BPL/LPL"/>
</dbReference>
<dbReference type="InterPro" id="IPR004143">
    <property type="entry name" value="BPL_LPL_catalytic"/>
</dbReference>
<dbReference type="InterPro" id="IPR000544">
    <property type="entry name" value="Octanoyltransferase"/>
</dbReference>
<dbReference type="InterPro" id="IPR020605">
    <property type="entry name" value="Octanoyltransferase_CS"/>
</dbReference>
<dbReference type="NCBIfam" id="TIGR00214">
    <property type="entry name" value="lipB"/>
    <property type="match status" value="1"/>
</dbReference>
<dbReference type="NCBIfam" id="NF010921">
    <property type="entry name" value="PRK14341.1"/>
    <property type="match status" value="1"/>
</dbReference>
<dbReference type="NCBIfam" id="NF010925">
    <property type="entry name" value="PRK14345.1"/>
    <property type="match status" value="1"/>
</dbReference>
<dbReference type="PANTHER" id="PTHR10993:SF7">
    <property type="entry name" value="LIPOYLTRANSFERASE 2, MITOCHONDRIAL-RELATED"/>
    <property type="match status" value="1"/>
</dbReference>
<dbReference type="PANTHER" id="PTHR10993">
    <property type="entry name" value="OCTANOYLTRANSFERASE"/>
    <property type="match status" value="1"/>
</dbReference>
<dbReference type="Pfam" id="PF21948">
    <property type="entry name" value="LplA-B_cat"/>
    <property type="match status" value="1"/>
</dbReference>
<dbReference type="PIRSF" id="PIRSF016262">
    <property type="entry name" value="LPLase"/>
    <property type="match status" value="1"/>
</dbReference>
<dbReference type="SUPFAM" id="SSF55681">
    <property type="entry name" value="Class II aaRS and biotin synthetases"/>
    <property type="match status" value="1"/>
</dbReference>
<dbReference type="PROSITE" id="PS51733">
    <property type="entry name" value="BPL_LPL_CATALYTIC"/>
    <property type="match status" value="1"/>
</dbReference>
<dbReference type="PROSITE" id="PS01313">
    <property type="entry name" value="LIPB"/>
    <property type="match status" value="1"/>
</dbReference>
<sequence length="212" mass="23600">MNYPVEWRISDSPVDYPQAIAAMEERVAAIRAGTAPELVWLLEHPPLYSAGTSADPRDLVDPGRFPVYETGRGGQYTYHGPGQRVAYVLLDLKRRGADVRVYVCNLEEWLIRTLARFVVKGERRTGRVGIWVDRGGGREDKIAAIGVRVRHWVTFHGIALNVDPDLSHFEGIVPCGIREHGVTSLWDLGLTPTMDDVDCALMATFPEVFGAD</sequence>
<name>LIPB_PARM1</name>
<reference key="1">
    <citation type="journal article" date="2005" name="DNA Res.">
        <title>Complete genome sequence of the facultative anaerobic magnetotactic bacterium Magnetospirillum sp. strain AMB-1.</title>
        <authorList>
            <person name="Matsunaga T."/>
            <person name="Okamura Y."/>
            <person name="Fukuda Y."/>
            <person name="Wahyudi A.T."/>
            <person name="Murase Y."/>
            <person name="Takeyama H."/>
        </authorList>
    </citation>
    <scope>NUCLEOTIDE SEQUENCE [LARGE SCALE GENOMIC DNA]</scope>
    <source>
        <strain>ATCC 700264 / AMB-1</strain>
    </source>
</reference>
<organism>
    <name type="scientific">Paramagnetospirillum magneticum (strain ATCC 700264 / AMB-1)</name>
    <name type="common">Magnetospirillum magneticum</name>
    <dbReference type="NCBI Taxonomy" id="342108"/>
    <lineage>
        <taxon>Bacteria</taxon>
        <taxon>Pseudomonadati</taxon>
        <taxon>Pseudomonadota</taxon>
        <taxon>Alphaproteobacteria</taxon>
        <taxon>Rhodospirillales</taxon>
        <taxon>Magnetospirillaceae</taxon>
        <taxon>Paramagnetospirillum</taxon>
    </lineage>
</organism>
<evidence type="ECO:0000255" key="1">
    <source>
        <dbReference type="HAMAP-Rule" id="MF_00013"/>
    </source>
</evidence>
<evidence type="ECO:0000255" key="2">
    <source>
        <dbReference type="PROSITE-ProRule" id="PRU01067"/>
    </source>
</evidence>
<gene>
    <name evidence="1" type="primary">lipB</name>
    <name type="ordered locus">amb0721</name>
</gene>
<comment type="function">
    <text evidence="1">Catalyzes the transfer of endogenously produced octanoic acid from octanoyl-acyl-carrier-protein onto the lipoyl domains of lipoate-dependent enzymes. Lipoyl-ACP can also act as a substrate although octanoyl-ACP is likely to be the physiological substrate.</text>
</comment>
<comment type="catalytic activity">
    <reaction evidence="1">
        <text>octanoyl-[ACP] + L-lysyl-[protein] = N(6)-octanoyl-L-lysyl-[protein] + holo-[ACP] + H(+)</text>
        <dbReference type="Rhea" id="RHEA:17665"/>
        <dbReference type="Rhea" id="RHEA-COMP:9636"/>
        <dbReference type="Rhea" id="RHEA-COMP:9685"/>
        <dbReference type="Rhea" id="RHEA-COMP:9752"/>
        <dbReference type="Rhea" id="RHEA-COMP:9928"/>
        <dbReference type="ChEBI" id="CHEBI:15378"/>
        <dbReference type="ChEBI" id="CHEBI:29969"/>
        <dbReference type="ChEBI" id="CHEBI:64479"/>
        <dbReference type="ChEBI" id="CHEBI:78463"/>
        <dbReference type="ChEBI" id="CHEBI:78809"/>
        <dbReference type="EC" id="2.3.1.181"/>
    </reaction>
</comment>
<comment type="pathway">
    <text evidence="1">Protein modification; protein lipoylation via endogenous pathway; protein N(6)-(lipoyl)lysine from octanoyl-[acyl-carrier-protein]: step 1/2.</text>
</comment>
<comment type="subcellular location">
    <subcellularLocation>
        <location evidence="1">Cytoplasm</location>
    </subcellularLocation>
</comment>
<comment type="miscellaneous">
    <text evidence="1">In the reaction, the free carboxyl group of octanoic acid is attached via an amide linkage to the epsilon-amino group of a specific lysine residue of lipoyl domains of lipoate-dependent enzymes.</text>
</comment>
<comment type="similarity">
    <text evidence="1">Belongs to the LipB family.</text>
</comment>
<feature type="chain" id="PRO_0000242733" description="Octanoyltransferase">
    <location>
        <begin position="1"/>
        <end position="212"/>
    </location>
</feature>
<feature type="domain" description="BPL/LPL catalytic" evidence="2">
    <location>
        <begin position="33"/>
        <end position="212"/>
    </location>
</feature>
<feature type="active site" description="Acyl-thioester intermediate" evidence="1">
    <location>
        <position position="175"/>
    </location>
</feature>
<feature type="binding site" evidence="1">
    <location>
        <begin position="72"/>
        <end position="79"/>
    </location>
    <ligand>
        <name>substrate</name>
    </ligand>
</feature>
<feature type="binding site" evidence="1">
    <location>
        <begin position="144"/>
        <end position="146"/>
    </location>
    <ligand>
        <name>substrate</name>
    </ligand>
</feature>
<feature type="binding site" evidence="1">
    <location>
        <begin position="157"/>
        <end position="159"/>
    </location>
    <ligand>
        <name>substrate</name>
    </ligand>
</feature>
<feature type="site" description="Lowers pKa of active site Cys" evidence="1">
    <location>
        <position position="141"/>
    </location>
</feature>
<accession>Q2W9F0</accession>
<proteinExistence type="inferred from homology"/>
<keyword id="KW-0012">Acyltransferase</keyword>
<keyword id="KW-0963">Cytoplasm</keyword>
<keyword id="KW-0808">Transferase</keyword>